<keyword id="KW-0027">Amidation</keyword>
<keyword id="KW-0903">Direct protein sequencing</keyword>
<keyword id="KW-1015">Disulfide bond</keyword>
<keyword id="KW-0872">Ion channel impairing toxin</keyword>
<keyword id="KW-0960">Knottin</keyword>
<keyword id="KW-0964">Secreted</keyword>
<keyword id="KW-0732">Signal</keyword>
<keyword id="KW-0800">Toxin</keyword>
<feature type="signal peptide" evidence="2">
    <location>
        <begin position="1"/>
        <end position="21"/>
    </location>
</feature>
<feature type="propeptide" id="PRO_0000398417" evidence="3">
    <location>
        <begin position="22"/>
        <end position="29"/>
    </location>
</feature>
<feature type="peptide" id="PRO_0000398418" description="U1-theraphotoxin-Cg1d 2">
    <location>
        <begin position="30"/>
        <end position="63"/>
    </location>
</feature>
<feature type="modified residue" description="Proline amide" evidence="3">
    <location>
        <position position="63"/>
    </location>
</feature>
<feature type="disulfide bond" evidence="1">
    <location>
        <begin position="31"/>
        <end position="46"/>
    </location>
</feature>
<feature type="disulfide bond" evidence="1">
    <location>
        <begin position="38"/>
        <end position="51"/>
    </location>
</feature>
<feature type="disulfide bond" evidence="1">
    <location>
        <begin position="45"/>
        <end position="58"/>
    </location>
</feature>
<organism>
    <name type="scientific">Chilobrachys guangxiensis</name>
    <name type="common">Chinese earth tiger tarantula</name>
    <name type="synonym">Chilobrachys jingzhao</name>
    <dbReference type="NCBI Taxonomy" id="278060"/>
    <lineage>
        <taxon>Eukaryota</taxon>
        <taxon>Metazoa</taxon>
        <taxon>Ecdysozoa</taxon>
        <taxon>Arthropoda</taxon>
        <taxon>Chelicerata</taxon>
        <taxon>Arachnida</taxon>
        <taxon>Araneae</taxon>
        <taxon>Mygalomorphae</taxon>
        <taxon>Theraphosidae</taxon>
        <taxon>Chilobrachys</taxon>
    </lineage>
</organism>
<evidence type="ECO:0000250" key="1"/>
<evidence type="ECO:0000255" key="2"/>
<evidence type="ECO:0000269" key="3">
    <source>
    </source>
</evidence>
<evidence type="ECO:0000305" key="4"/>
<accession>B1P1C6</accession>
<comment type="function">
    <text>Probable ion channel inhibitor.</text>
</comment>
<comment type="subcellular location">
    <subcellularLocation>
        <location>Secreted</location>
    </subcellularLocation>
</comment>
<comment type="tissue specificity">
    <text>Expressed by the venom gland.</text>
</comment>
<comment type="domain">
    <text evidence="1">The presence of a 'disulfide through disulfide knot' structurally defines this protein as a knottin.</text>
</comment>
<comment type="similarity">
    <text evidence="4">Belongs to the neurotoxin 10 (Hwtx-1) family. 46 (Jztx-7/10/12) subfamily.</text>
</comment>
<reference key="1">
    <citation type="journal article" date="2008" name="Cell. Mol. Life Sci.">
        <title>Molecular diversity and evolution of cystine knot toxins of the tarantula Chilobrachys jingzhao.</title>
        <authorList>
            <person name="Chen J."/>
            <person name="Deng M."/>
            <person name="He Q."/>
            <person name="Meng E."/>
            <person name="Jiang L."/>
            <person name="Liao Z."/>
            <person name="Rong M."/>
            <person name="Liang S."/>
        </authorList>
    </citation>
    <scope>NUCLEOTIDE SEQUENCE [LARGE SCALE MRNA]</scope>
    <source>
        <tissue>Venom gland</tissue>
    </source>
</reference>
<reference key="2">
    <citation type="journal article" date="2007" name="Proteomics">
        <title>Proteomic and peptidomic analysis of the venom from Chinese tarantula Chilobrachys jingzhao.</title>
        <authorList>
            <person name="Liao Z."/>
            <person name="Cao J."/>
            <person name="Li S."/>
            <person name="Yan X."/>
            <person name="Hu W."/>
            <person name="He Q."/>
            <person name="Chen J."/>
            <person name="Tang J."/>
            <person name="Xie J."/>
            <person name="Liang S."/>
        </authorList>
    </citation>
    <scope>PROTEIN SEQUENCE OF 30-63</scope>
    <scope>IDENTIFICATION BY MASS SPECTROMETRY</scope>
    <scope>AMIDATION AT PRO-63</scope>
    <source>
        <tissue>Venom</tissue>
    </source>
</reference>
<dbReference type="EMBL" id="EU233857">
    <property type="protein sequence ID" value="ABY71676.1"/>
    <property type="molecule type" value="mRNA"/>
</dbReference>
<dbReference type="SMR" id="B1P1C6"/>
<dbReference type="ArachnoServer" id="AS000804">
    <property type="toxin name" value="U1-theraphotoxin-Cg1d"/>
</dbReference>
<dbReference type="GO" id="GO:0005576">
    <property type="term" value="C:extracellular region"/>
    <property type="evidence" value="ECO:0007669"/>
    <property type="project" value="UniProtKB-SubCell"/>
</dbReference>
<dbReference type="GO" id="GO:0008200">
    <property type="term" value="F:ion channel inhibitor activity"/>
    <property type="evidence" value="ECO:0007669"/>
    <property type="project" value="InterPro"/>
</dbReference>
<dbReference type="GO" id="GO:0090729">
    <property type="term" value="F:toxin activity"/>
    <property type="evidence" value="ECO:0007669"/>
    <property type="project" value="UniProtKB-KW"/>
</dbReference>
<dbReference type="InterPro" id="IPR011696">
    <property type="entry name" value="Huwentoxin-1"/>
</dbReference>
<dbReference type="InterPro" id="IPR013140">
    <property type="entry name" value="Huwentoxin_CS1"/>
</dbReference>
<dbReference type="Pfam" id="PF07740">
    <property type="entry name" value="Toxin_12"/>
    <property type="match status" value="1"/>
</dbReference>
<dbReference type="SUPFAM" id="SSF57059">
    <property type="entry name" value="omega toxin-like"/>
    <property type="match status" value="1"/>
</dbReference>
<dbReference type="PROSITE" id="PS60021">
    <property type="entry name" value="HWTX_1"/>
    <property type="match status" value="1"/>
</dbReference>
<protein>
    <recommendedName>
        <fullName>U1-theraphotoxin-Cg1d 2</fullName>
        <shortName>U1-TRTX-Cg1d</shortName>
    </recommendedName>
    <alternativeName>
        <fullName>Jingzhaotoxin-12.2</fullName>
        <shortName>JZTX-12.2</shortName>
    </alternativeName>
    <alternativeName>
        <fullName>Peptide F4-15.91</fullName>
    </alternativeName>
</protein>
<name>JZ12B_CHIGU</name>
<sequence>MKMSALFPIFGLPLLFCNSFAAELKATGRGCGGLMDGCDGKSTFCCSGFNCSPTWKWCVYARPGRR</sequence>
<proteinExistence type="evidence at protein level"/>